<reference key="1">
    <citation type="journal article" date="2005" name="Genome Res.">
        <title>Coping with cold: the genome of the versatile marine Antarctica bacterium Pseudoalteromonas haloplanktis TAC125.</title>
        <authorList>
            <person name="Medigue C."/>
            <person name="Krin E."/>
            <person name="Pascal G."/>
            <person name="Barbe V."/>
            <person name="Bernsel A."/>
            <person name="Bertin P.N."/>
            <person name="Cheung F."/>
            <person name="Cruveiller S."/>
            <person name="D'Amico S."/>
            <person name="Duilio A."/>
            <person name="Fang G."/>
            <person name="Feller G."/>
            <person name="Ho C."/>
            <person name="Mangenot S."/>
            <person name="Marino G."/>
            <person name="Nilsson J."/>
            <person name="Parrilli E."/>
            <person name="Rocha E.P.C."/>
            <person name="Rouy Z."/>
            <person name="Sekowska A."/>
            <person name="Tutino M.L."/>
            <person name="Vallenet D."/>
            <person name="von Heijne G."/>
            <person name="Danchin A."/>
        </authorList>
    </citation>
    <scope>NUCLEOTIDE SEQUENCE [LARGE SCALE GENOMIC DNA]</scope>
    <source>
        <strain>TAC 125</strain>
    </source>
</reference>
<gene>
    <name evidence="1" type="primary">atpD</name>
    <name type="ordered locus">PSHAa3008</name>
</gene>
<protein>
    <recommendedName>
        <fullName evidence="1">ATP synthase subunit beta</fullName>
        <ecNumber evidence="1">7.1.2.2</ecNumber>
    </recommendedName>
    <alternativeName>
        <fullName evidence="1">ATP synthase F1 sector subunit beta</fullName>
    </alternativeName>
    <alternativeName>
        <fullName evidence="1">F-ATPase subunit beta</fullName>
    </alternativeName>
</protein>
<keyword id="KW-0066">ATP synthesis</keyword>
<keyword id="KW-0067">ATP-binding</keyword>
<keyword id="KW-0997">Cell inner membrane</keyword>
<keyword id="KW-1003">Cell membrane</keyword>
<keyword id="KW-0139">CF(1)</keyword>
<keyword id="KW-0375">Hydrogen ion transport</keyword>
<keyword id="KW-0406">Ion transport</keyword>
<keyword id="KW-0472">Membrane</keyword>
<keyword id="KW-0547">Nucleotide-binding</keyword>
<keyword id="KW-1185">Reference proteome</keyword>
<keyword id="KW-1278">Translocase</keyword>
<keyword id="KW-0813">Transport</keyword>
<evidence type="ECO:0000255" key="1">
    <source>
        <dbReference type="HAMAP-Rule" id="MF_01347"/>
    </source>
</evidence>
<proteinExistence type="inferred from homology"/>
<comment type="function">
    <text evidence="1">Produces ATP from ADP in the presence of a proton gradient across the membrane. The catalytic sites are hosted primarily by the beta subunits.</text>
</comment>
<comment type="catalytic activity">
    <reaction evidence="1">
        <text>ATP + H2O + 4 H(+)(in) = ADP + phosphate + 5 H(+)(out)</text>
        <dbReference type="Rhea" id="RHEA:57720"/>
        <dbReference type="ChEBI" id="CHEBI:15377"/>
        <dbReference type="ChEBI" id="CHEBI:15378"/>
        <dbReference type="ChEBI" id="CHEBI:30616"/>
        <dbReference type="ChEBI" id="CHEBI:43474"/>
        <dbReference type="ChEBI" id="CHEBI:456216"/>
        <dbReference type="EC" id="7.1.2.2"/>
    </reaction>
</comment>
<comment type="subunit">
    <text evidence="1">F-type ATPases have 2 components, CF(1) - the catalytic core - and CF(0) - the membrane proton channel. CF(1) has five subunits: alpha(3), beta(3), gamma(1), delta(1), epsilon(1). CF(0) has three main subunits: a(1), b(2) and c(9-12). The alpha and beta chains form an alternating ring which encloses part of the gamma chain. CF(1) is attached to CF(0) by a central stalk formed by the gamma and epsilon chains, while a peripheral stalk is formed by the delta and b chains.</text>
</comment>
<comment type="subcellular location">
    <subcellularLocation>
        <location evidence="1">Cell inner membrane</location>
        <topology evidence="1">Peripheral membrane protein</topology>
    </subcellularLocation>
</comment>
<comment type="similarity">
    <text evidence="1">Belongs to the ATPase alpha/beta chains family.</text>
</comment>
<organism>
    <name type="scientific">Pseudoalteromonas translucida (strain TAC 125)</name>
    <dbReference type="NCBI Taxonomy" id="326442"/>
    <lineage>
        <taxon>Bacteria</taxon>
        <taxon>Pseudomonadati</taxon>
        <taxon>Pseudomonadota</taxon>
        <taxon>Gammaproteobacteria</taxon>
        <taxon>Alteromonadales</taxon>
        <taxon>Pseudoalteromonadaceae</taxon>
        <taxon>Pseudoalteromonas</taxon>
    </lineage>
</organism>
<sequence length="461" mass="49890">MSLGKVVQIIGAVVDIEFPQNNVPAVYDALRVTDGDLTGLTLEVQQQLGGGVVRTIAMGTTDGLRRGASVMNTGESIQVPVGKATLGRIMNVLGEPIDEAGPIGEEDRMSIHRAAPTYEEQSSSVELLETGIKVIDLVCPFAKGGKVGLFGGAGVGKTVNMMELIRNIAIEHSGYSVFAGVGERTREGNDFYHEMNDSNVLDKVSLVYGQMNEPPGNRLRVALTGLTMAEKFRDEGRDVLFFVDNIYRYTLAGTEVSALLGRMPSAVGYQPTLAEEMGVLQERIASTKTGSITSIQAVYVPADDLTDPSPATTFAHLDATVVLSRDIASLGIYPAVDPLDSSSRQLDPQVIGQEHYDTARGVQTVLQRYKELKDIIAILGMDELSDEDKQLVSRARKIQRFLSQPFFVAEVFTGASGKYVSLKDTISGFKGILNGEFDDMPEQAFYMVGSIEEAQEKAKSM</sequence>
<feature type="chain" id="PRO_0000254337" description="ATP synthase subunit beta">
    <location>
        <begin position="1"/>
        <end position="461"/>
    </location>
</feature>
<feature type="binding site" evidence="1">
    <location>
        <begin position="151"/>
        <end position="158"/>
    </location>
    <ligand>
        <name>ATP</name>
        <dbReference type="ChEBI" id="CHEBI:30616"/>
    </ligand>
</feature>
<accession>Q3IK50</accession>
<name>ATPB_PSET1</name>
<dbReference type="EC" id="7.1.2.2" evidence="1"/>
<dbReference type="EMBL" id="CR954246">
    <property type="protein sequence ID" value="CAI88037.1"/>
    <property type="molecule type" value="Genomic_DNA"/>
</dbReference>
<dbReference type="SMR" id="Q3IK50"/>
<dbReference type="STRING" id="326442.PSHAa3008"/>
<dbReference type="KEGG" id="pha:PSHAa3008"/>
<dbReference type="eggNOG" id="COG0055">
    <property type="taxonomic scope" value="Bacteria"/>
</dbReference>
<dbReference type="HOGENOM" id="CLU_022398_0_2_6"/>
<dbReference type="BioCyc" id="PHAL326442:PSHA_RS14760-MONOMER"/>
<dbReference type="Proteomes" id="UP000006843">
    <property type="component" value="Chromosome I"/>
</dbReference>
<dbReference type="GO" id="GO:0005886">
    <property type="term" value="C:plasma membrane"/>
    <property type="evidence" value="ECO:0007669"/>
    <property type="project" value="UniProtKB-SubCell"/>
</dbReference>
<dbReference type="GO" id="GO:0045259">
    <property type="term" value="C:proton-transporting ATP synthase complex"/>
    <property type="evidence" value="ECO:0007669"/>
    <property type="project" value="UniProtKB-KW"/>
</dbReference>
<dbReference type="GO" id="GO:0005524">
    <property type="term" value="F:ATP binding"/>
    <property type="evidence" value="ECO:0007669"/>
    <property type="project" value="UniProtKB-UniRule"/>
</dbReference>
<dbReference type="GO" id="GO:0016887">
    <property type="term" value="F:ATP hydrolysis activity"/>
    <property type="evidence" value="ECO:0007669"/>
    <property type="project" value="InterPro"/>
</dbReference>
<dbReference type="GO" id="GO:0046933">
    <property type="term" value="F:proton-transporting ATP synthase activity, rotational mechanism"/>
    <property type="evidence" value="ECO:0007669"/>
    <property type="project" value="UniProtKB-UniRule"/>
</dbReference>
<dbReference type="CDD" id="cd18110">
    <property type="entry name" value="ATP-synt_F1_beta_C"/>
    <property type="match status" value="1"/>
</dbReference>
<dbReference type="CDD" id="cd18115">
    <property type="entry name" value="ATP-synt_F1_beta_N"/>
    <property type="match status" value="1"/>
</dbReference>
<dbReference type="CDD" id="cd01133">
    <property type="entry name" value="F1-ATPase_beta_CD"/>
    <property type="match status" value="1"/>
</dbReference>
<dbReference type="FunFam" id="1.10.1140.10:FF:000001">
    <property type="entry name" value="ATP synthase subunit beta"/>
    <property type="match status" value="1"/>
</dbReference>
<dbReference type="FunFam" id="3.40.50.300:FF:000004">
    <property type="entry name" value="ATP synthase subunit beta"/>
    <property type="match status" value="1"/>
</dbReference>
<dbReference type="Gene3D" id="2.40.10.170">
    <property type="match status" value="1"/>
</dbReference>
<dbReference type="Gene3D" id="1.10.1140.10">
    <property type="entry name" value="Bovine Mitochondrial F1-atpase, Atp Synthase Beta Chain, Chain D, domain 3"/>
    <property type="match status" value="1"/>
</dbReference>
<dbReference type="Gene3D" id="3.40.50.300">
    <property type="entry name" value="P-loop containing nucleotide triphosphate hydrolases"/>
    <property type="match status" value="1"/>
</dbReference>
<dbReference type="HAMAP" id="MF_01347">
    <property type="entry name" value="ATP_synth_beta_bact"/>
    <property type="match status" value="1"/>
</dbReference>
<dbReference type="InterPro" id="IPR003593">
    <property type="entry name" value="AAA+_ATPase"/>
</dbReference>
<dbReference type="InterPro" id="IPR055190">
    <property type="entry name" value="ATP-synt_VA_C"/>
</dbReference>
<dbReference type="InterPro" id="IPR005722">
    <property type="entry name" value="ATP_synth_F1_bsu"/>
</dbReference>
<dbReference type="InterPro" id="IPR020003">
    <property type="entry name" value="ATPase_a/bsu_AS"/>
</dbReference>
<dbReference type="InterPro" id="IPR050053">
    <property type="entry name" value="ATPase_alpha/beta_chains"/>
</dbReference>
<dbReference type="InterPro" id="IPR004100">
    <property type="entry name" value="ATPase_F1/V1/A1_a/bsu_N"/>
</dbReference>
<dbReference type="InterPro" id="IPR036121">
    <property type="entry name" value="ATPase_F1/V1/A1_a/bsu_N_sf"/>
</dbReference>
<dbReference type="InterPro" id="IPR000194">
    <property type="entry name" value="ATPase_F1/V1/A1_a/bsu_nucl-bd"/>
</dbReference>
<dbReference type="InterPro" id="IPR024034">
    <property type="entry name" value="ATPase_F1/V1_b/a_C"/>
</dbReference>
<dbReference type="InterPro" id="IPR027417">
    <property type="entry name" value="P-loop_NTPase"/>
</dbReference>
<dbReference type="NCBIfam" id="TIGR01039">
    <property type="entry name" value="atpD"/>
    <property type="match status" value="1"/>
</dbReference>
<dbReference type="PANTHER" id="PTHR15184">
    <property type="entry name" value="ATP SYNTHASE"/>
    <property type="match status" value="1"/>
</dbReference>
<dbReference type="PANTHER" id="PTHR15184:SF71">
    <property type="entry name" value="ATP SYNTHASE SUBUNIT BETA, MITOCHONDRIAL"/>
    <property type="match status" value="1"/>
</dbReference>
<dbReference type="Pfam" id="PF00006">
    <property type="entry name" value="ATP-synt_ab"/>
    <property type="match status" value="1"/>
</dbReference>
<dbReference type="Pfam" id="PF02874">
    <property type="entry name" value="ATP-synt_ab_N"/>
    <property type="match status" value="1"/>
</dbReference>
<dbReference type="Pfam" id="PF22919">
    <property type="entry name" value="ATP-synt_VA_C"/>
    <property type="match status" value="1"/>
</dbReference>
<dbReference type="SMART" id="SM00382">
    <property type="entry name" value="AAA"/>
    <property type="match status" value="1"/>
</dbReference>
<dbReference type="SUPFAM" id="SSF47917">
    <property type="entry name" value="C-terminal domain of alpha and beta subunits of F1 ATP synthase"/>
    <property type="match status" value="1"/>
</dbReference>
<dbReference type="SUPFAM" id="SSF50615">
    <property type="entry name" value="N-terminal domain of alpha and beta subunits of F1 ATP synthase"/>
    <property type="match status" value="1"/>
</dbReference>
<dbReference type="SUPFAM" id="SSF52540">
    <property type="entry name" value="P-loop containing nucleoside triphosphate hydrolases"/>
    <property type="match status" value="1"/>
</dbReference>
<dbReference type="PROSITE" id="PS00152">
    <property type="entry name" value="ATPASE_ALPHA_BETA"/>
    <property type="match status" value="1"/>
</dbReference>